<protein>
    <recommendedName>
        <fullName>Signal peptidase complex subunit 1</fullName>
    </recommendedName>
    <alternativeName>
        <fullName>Microsomal signal peptidase 12 kDa subunit</fullName>
        <shortName>SPase 12 kDa subunit</shortName>
    </alternativeName>
</protein>
<comment type="function">
    <text evidence="1 3">Component of the signal peptidase complex (SPC) which catalyzes the cleavage of N-terminal signal sequences from nascent proteins as they are translocated into the lumen of the endoplasmic reticulum (By similarity). Dispensable for SPC enzymatic activity (By similarity).</text>
</comment>
<comment type="subunit">
    <text evidence="3">Component of the signal peptidase complex paralog A (SPC-A) composed of a catalytic subunit SEC11A and three accessory subunits SPCS1, SPCS2 and SPCS3. Component of the signal peptidase complex paralog C (SPC-C) composed of a catalytic subunit SEC11C and three accessory subunits SPCS1, SPCS2 and SPCS3. Within the complex, interacts with SPCS2 and SPCS3. The complex induces a local thinning of the ER membrane which is used to measure the length of the signal peptide (SP) h-region of protein substrates. This ensures the selectivity of the complex towards h-regions shorter than 18-20 amino acids.</text>
</comment>
<comment type="subcellular location">
    <subcellularLocation>
        <location evidence="2">Endoplasmic reticulum membrane</location>
        <topology evidence="2">Multi-pass membrane protein</topology>
    </subcellularLocation>
</comment>
<comment type="PTM">
    <text evidence="3">May be phosphorylated.</text>
</comment>
<comment type="similarity">
    <text evidence="6">Belongs to the SPCS1 family.</text>
</comment>
<name>SPCS1_BOVIN</name>
<dbReference type="EMBL" id="BC102144">
    <property type="protein sequence ID" value="AAI02145.1"/>
    <property type="molecule type" value="mRNA"/>
</dbReference>
<dbReference type="RefSeq" id="NP_001029576.1">
    <property type="nucleotide sequence ID" value="NM_001034404.2"/>
</dbReference>
<dbReference type="SMR" id="Q3T134"/>
<dbReference type="FunCoup" id="Q3T134">
    <property type="interactions" value="2278"/>
</dbReference>
<dbReference type="STRING" id="9913.ENSBTAP00000070363"/>
<dbReference type="PaxDb" id="9913-ENSBTAP00000006231"/>
<dbReference type="GeneID" id="511453"/>
<dbReference type="KEGG" id="bta:511453"/>
<dbReference type="CTD" id="28972"/>
<dbReference type="eggNOG" id="KOG4112">
    <property type="taxonomic scope" value="Eukaryota"/>
</dbReference>
<dbReference type="HOGENOM" id="CLU_134505_1_0_1"/>
<dbReference type="InParanoid" id="Q3T134"/>
<dbReference type="OrthoDB" id="263893at2759"/>
<dbReference type="TreeFam" id="TF106122"/>
<dbReference type="Proteomes" id="UP000009136">
    <property type="component" value="Unplaced"/>
</dbReference>
<dbReference type="GO" id="GO:0005787">
    <property type="term" value="C:signal peptidase complex"/>
    <property type="evidence" value="ECO:0000318"/>
    <property type="project" value="GO_Central"/>
</dbReference>
<dbReference type="GO" id="GO:0045047">
    <property type="term" value="P:protein targeting to ER"/>
    <property type="evidence" value="ECO:0000318"/>
    <property type="project" value="GO_Central"/>
</dbReference>
<dbReference type="GO" id="GO:0006465">
    <property type="term" value="P:signal peptide processing"/>
    <property type="evidence" value="ECO:0000318"/>
    <property type="project" value="GO_Central"/>
</dbReference>
<dbReference type="InterPro" id="IPR009542">
    <property type="entry name" value="Spc1/SPCS1"/>
</dbReference>
<dbReference type="PANTHER" id="PTHR13202">
    <property type="entry name" value="MICROSOMAL SIGNAL PEPTIDASE 12 KDA SUBUNIT"/>
    <property type="match status" value="1"/>
</dbReference>
<dbReference type="PANTHER" id="PTHR13202:SF0">
    <property type="entry name" value="SIGNAL PEPTIDASE COMPLEX SUBUNIT 1"/>
    <property type="match status" value="1"/>
</dbReference>
<dbReference type="Pfam" id="PF06645">
    <property type="entry name" value="SPC12"/>
    <property type="match status" value="1"/>
</dbReference>
<keyword id="KW-0256">Endoplasmic reticulum</keyword>
<keyword id="KW-0472">Membrane</keyword>
<keyword id="KW-1185">Reference proteome</keyword>
<keyword id="KW-0812">Transmembrane</keyword>
<keyword id="KW-1133">Transmembrane helix</keyword>
<organism>
    <name type="scientific">Bos taurus</name>
    <name type="common">Bovine</name>
    <dbReference type="NCBI Taxonomy" id="9913"/>
    <lineage>
        <taxon>Eukaryota</taxon>
        <taxon>Metazoa</taxon>
        <taxon>Chordata</taxon>
        <taxon>Craniata</taxon>
        <taxon>Vertebrata</taxon>
        <taxon>Euteleostomi</taxon>
        <taxon>Mammalia</taxon>
        <taxon>Eutheria</taxon>
        <taxon>Laurasiatheria</taxon>
        <taxon>Artiodactyla</taxon>
        <taxon>Ruminantia</taxon>
        <taxon>Pecora</taxon>
        <taxon>Bovidae</taxon>
        <taxon>Bovinae</taxon>
        <taxon>Bos</taxon>
    </lineage>
</organism>
<proteinExistence type="inferred from homology"/>
<sequence>MLEHLSSLPTQMDYKGQKLAEQMFQGIILFSAIVGFIYGYLAEQFGWTVYIVMAGFAFSCLLTLPPWPIYRRHPLKWLPVQDSSTEDKKPGERKVKRHAKNN</sequence>
<accession>Q3T134</accession>
<evidence type="ECO:0000250" key="1">
    <source>
        <dbReference type="UniProtKB" id="P46965"/>
    </source>
</evidence>
<evidence type="ECO:0000250" key="2">
    <source>
        <dbReference type="UniProtKB" id="P83362"/>
    </source>
</evidence>
<evidence type="ECO:0000250" key="3">
    <source>
        <dbReference type="UniProtKB" id="Q9Y6A9"/>
    </source>
</evidence>
<evidence type="ECO:0000255" key="4"/>
<evidence type="ECO:0000256" key="5">
    <source>
        <dbReference type="SAM" id="MobiDB-lite"/>
    </source>
</evidence>
<evidence type="ECO:0000305" key="6"/>
<feature type="chain" id="PRO_0000244605" description="Signal peptidase complex subunit 1">
    <location>
        <begin position="1"/>
        <end position="102"/>
    </location>
</feature>
<feature type="topological domain" description="Cytoplasmic" evidence="2">
    <location>
        <begin position="1"/>
        <end position="19"/>
    </location>
</feature>
<feature type="transmembrane region" description="Helical" evidence="4">
    <location>
        <begin position="20"/>
        <end position="42"/>
    </location>
</feature>
<feature type="topological domain" description="Lumenal" evidence="2">
    <location>
        <begin position="43"/>
        <end position="46"/>
    </location>
</feature>
<feature type="transmembrane region" description="Helical" evidence="4">
    <location>
        <begin position="47"/>
        <end position="69"/>
    </location>
</feature>
<feature type="topological domain" description="Cytoplasmic" evidence="2">
    <location>
        <begin position="70"/>
        <end position="102"/>
    </location>
</feature>
<feature type="region of interest" description="Disordered" evidence="5">
    <location>
        <begin position="81"/>
        <end position="102"/>
    </location>
</feature>
<reference key="1">
    <citation type="submission" date="2005-08" db="EMBL/GenBank/DDBJ databases">
        <authorList>
            <consortium name="NIH - Mammalian Gene Collection (MGC) project"/>
        </authorList>
    </citation>
    <scope>NUCLEOTIDE SEQUENCE [LARGE SCALE MRNA]</scope>
    <source>
        <strain>Crossbred X Angus</strain>
        <tissue>Ileum</tissue>
    </source>
</reference>
<gene>
    <name type="primary">SPCS1</name>
</gene>